<keyword id="KW-1185">Reference proteome</keyword>
<evidence type="ECO:0000256" key="1">
    <source>
        <dbReference type="SAM" id="MobiDB-lite"/>
    </source>
</evidence>
<evidence type="ECO:0000269" key="2">
    <source>
    </source>
</evidence>
<evidence type="ECO:0000303" key="3">
    <source>
    </source>
</evidence>
<evidence type="ECO:0000305" key="4">
    <source>
    </source>
</evidence>
<feature type="chain" id="PRO_0000451835" description="4'-hydroxy-3'-methoxypropiophenone carrier protein ppsC">
    <location>
        <begin position="1"/>
        <end position="111"/>
    </location>
</feature>
<feature type="region of interest" description="Disordered" evidence="1">
    <location>
        <begin position="1"/>
        <end position="21"/>
    </location>
</feature>
<protein>
    <recommendedName>
        <fullName evidence="3">4'-hydroxy-3'-methoxypropiophenone carrier protein ppsC</fullName>
    </recommendedName>
    <alternativeName>
        <fullName>2,4'-dihydroxy-3'-methoxypropiophenone biosynthesis cluster protein C</fullName>
    </alternativeName>
</protein>
<accession>Q2UAZ9</accession>
<proteinExistence type="predicted"/>
<gene>
    <name evidence="3" type="primary">ppsC</name>
    <name type="ORF">AO090102000167</name>
</gene>
<organism>
    <name type="scientific">Aspergillus oryzae (strain ATCC 42149 / RIB 40)</name>
    <name type="common">Yellow koji mold</name>
    <dbReference type="NCBI Taxonomy" id="510516"/>
    <lineage>
        <taxon>Eukaryota</taxon>
        <taxon>Fungi</taxon>
        <taxon>Dikarya</taxon>
        <taxon>Ascomycota</taxon>
        <taxon>Pezizomycotina</taxon>
        <taxon>Eurotiomycetes</taxon>
        <taxon>Eurotiomycetidae</taxon>
        <taxon>Eurotiales</taxon>
        <taxon>Aspergillaceae</taxon>
        <taxon>Aspergillus</taxon>
        <taxon>Aspergillus subgen. Circumdati</taxon>
    </lineage>
</organism>
<dbReference type="EMBL" id="BA000052">
    <property type="protein sequence ID" value="BAE61266.1"/>
    <property type="molecule type" value="Genomic_DNA"/>
</dbReference>
<dbReference type="EnsemblFungi" id="BAE61266">
    <property type="protein sequence ID" value="BAE61266"/>
    <property type="gene ID" value="AO090102000167"/>
</dbReference>
<dbReference type="HOGENOM" id="CLU_109259_2_0_1"/>
<dbReference type="Proteomes" id="UP000006564">
    <property type="component" value="Chromosome 4"/>
</dbReference>
<dbReference type="InterPro" id="IPR024311">
    <property type="entry name" value="Lipocalin-like"/>
</dbReference>
<dbReference type="Pfam" id="PF13924">
    <property type="entry name" value="Lipocalin_5"/>
    <property type="match status" value="1"/>
</dbReference>
<name>PPSC_ASPOR</name>
<sequence>MSAQVMRPGTPQHEGQEFLSGTDEELAVAMRHYLAYSGRFTVPDMASTENSTRRVIHEVEMSSYPNWIGTTQERVVHIKGDILELSTVHPLVISGIEQRSFLTWRKLPRLT</sequence>
<comment type="function">
    <text evidence="2 4">4'-hydroxy-3'-methoxypropiophenone carrier protein; part of the gene cluster that mediates the biosynthesis of 2,4'-dihydroxy-3'-methoxypropiophenone (PubMed:32885554). The first step of the pathway is the conversion of acetate into acetyl-CoA by the acyl-CoA ligase ppsA (PubMed:32885554). Acetyl-CoA is then used as a starter unit by the polyketide synthase ppsB and condensed with 4 malonyl-CoA unit to produce the pentaketide backbone (PubMed:32885554). During polyketide extension, the polykedite chain is probably reduced and dehydrated by the KR and PT domains, respectively (Probable). O-methylation seems to be catalyzed by an unknown methyltransferase rather than by the CMeT domain of ppsB (Probable). Two hydroxylations and one further decarboxylation step catalyzed by yet unknown enzymes are then required to yield 4'-hydroxy-3'-methoxypropiophenone (Probable). PpsC functions as a carrier protein to transport 4'-hydroxy-3'-methoxypropiophenone to a specific cell compartment in which 4'-hydroxy-3'-methoxypropiophenone is hydroxylated to 2,4'-dihydroxy-3'-methoxypropiophenone by a still to be identified enzyme (PubMed:32885554).</text>
</comment>
<comment type="pathway">
    <text evidence="2">Secondary metabolite biosynthesis.</text>
</comment>
<comment type="disruption phenotype">
    <text evidence="2">Decreases the production of 2,4'-dihydroxy-3'-methoxypropiophenone and but leads to the accumulation of 4'-hydroxy-3'-methoxypropiophenone.</text>
</comment>
<reference key="1">
    <citation type="journal article" date="2005" name="Nature">
        <title>Genome sequencing and analysis of Aspergillus oryzae.</title>
        <authorList>
            <person name="Machida M."/>
            <person name="Asai K."/>
            <person name="Sano M."/>
            <person name="Tanaka T."/>
            <person name="Kumagai T."/>
            <person name="Terai G."/>
            <person name="Kusumoto K."/>
            <person name="Arima T."/>
            <person name="Akita O."/>
            <person name="Kashiwagi Y."/>
            <person name="Abe K."/>
            <person name="Gomi K."/>
            <person name="Horiuchi H."/>
            <person name="Kitamoto K."/>
            <person name="Kobayashi T."/>
            <person name="Takeuchi M."/>
            <person name="Denning D.W."/>
            <person name="Galagan J.E."/>
            <person name="Nierman W.C."/>
            <person name="Yu J."/>
            <person name="Archer D.B."/>
            <person name="Bennett J.W."/>
            <person name="Bhatnagar D."/>
            <person name="Cleveland T.E."/>
            <person name="Fedorova N.D."/>
            <person name="Gotoh O."/>
            <person name="Horikawa H."/>
            <person name="Hosoyama A."/>
            <person name="Ichinomiya M."/>
            <person name="Igarashi R."/>
            <person name="Iwashita K."/>
            <person name="Juvvadi P.R."/>
            <person name="Kato M."/>
            <person name="Kato Y."/>
            <person name="Kin T."/>
            <person name="Kokubun A."/>
            <person name="Maeda H."/>
            <person name="Maeyama N."/>
            <person name="Maruyama J."/>
            <person name="Nagasaki H."/>
            <person name="Nakajima T."/>
            <person name="Oda K."/>
            <person name="Okada K."/>
            <person name="Paulsen I."/>
            <person name="Sakamoto K."/>
            <person name="Sawano T."/>
            <person name="Takahashi M."/>
            <person name="Takase K."/>
            <person name="Terabayashi Y."/>
            <person name="Wortman J.R."/>
            <person name="Yamada O."/>
            <person name="Yamagata Y."/>
            <person name="Anazawa H."/>
            <person name="Hata Y."/>
            <person name="Koide Y."/>
            <person name="Komori T."/>
            <person name="Koyama Y."/>
            <person name="Minetoki T."/>
            <person name="Suharnan S."/>
            <person name="Tanaka A."/>
            <person name="Isono K."/>
            <person name="Kuhara S."/>
            <person name="Ogasawara N."/>
            <person name="Kikuchi H."/>
        </authorList>
    </citation>
    <scope>NUCLEOTIDE SEQUENCE [LARGE SCALE GENOMIC DNA]</scope>
    <source>
        <strain>ATCC 42149 / RIB 40</strain>
    </source>
</reference>
<reference key="2">
    <citation type="journal article" date="2021" name="ChemBioChem">
        <title>Discovery of the 2,4'-dihydroxy-3'-methoxypropiophenone biosynthesis genes in Aspergillus oryzae.</title>
        <authorList>
            <person name="Kan E."/>
            <person name="Tomita H."/>
            <person name="Katsuyama Y."/>
            <person name="Maruyama J.I."/>
            <person name="Koyama Y."/>
            <person name="Ohnishi Y."/>
        </authorList>
    </citation>
    <scope>FUNCTION</scope>
    <scope>DISRUPTION PHENOTYPE</scope>
    <scope>PATHWAY</scope>
</reference>